<organism>
    <name type="scientific">Arabidopsis thaliana</name>
    <name type="common">Mouse-ear cress</name>
    <dbReference type="NCBI Taxonomy" id="3702"/>
    <lineage>
        <taxon>Eukaryota</taxon>
        <taxon>Viridiplantae</taxon>
        <taxon>Streptophyta</taxon>
        <taxon>Embryophyta</taxon>
        <taxon>Tracheophyta</taxon>
        <taxon>Spermatophyta</taxon>
        <taxon>Magnoliopsida</taxon>
        <taxon>eudicotyledons</taxon>
        <taxon>Gunneridae</taxon>
        <taxon>Pentapetalae</taxon>
        <taxon>rosids</taxon>
        <taxon>malvids</taxon>
        <taxon>Brassicales</taxon>
        <taxon>Brassicaceae</taxon>
        <taxon>Camelineae</taxon>
        <taxon>Arabidopsis</taxon>
    </lineage>
</organism>
<gene>
    <name type="ordered locus">At4g38730</name>
    <name type="ORF">T9A14_10</name>
</gene>
<evidence type="ECO:0000250" key="1"/>
<evidence type="ECO:0000255" key="2"/>
<evidence type="ECO:0000305" key="3"/>
<feature type="chain" id="PRO_0000430295" description="Probable magnesium transporter NIPA7">
    <location>
        <begin position="1"/>
        <end position="326"/>
    </location>
</feature>
<feature type="topological domain" description="Extracellular" evidence="2">
    <location>
        <begin position="1"/>
        <end position="4"/>
    </location>
</feature>
<feature type="transmembrane region" description="Helical; Name=1" evidence="2">
    <location>
        <begin position="5"/>
        <end position="25"/>
    </location>
</feature>
<feature type="topological domain" description="Cytoplasmic" evidence="2">
    <location>
        <begin position="26"/>
        <end position="51"/>
    </location>
</feature>
<feature type="transmembrane region" description="Helical; Name=2" evidence="2">
    <location>
        <begin position="52"/>
        <end position="72"/>
    </location>
</feature>
<feature type="topological domain" description="Extracellular" evidence="2">
    <location>
        <begin position="73"/>
        <end position="76"/>
    </location>
</feature>
<feature type="transmembrane region" description="Helical; Name=3" evidence="2">
    <location>
        <begin position="77"/>
        <end position="97"/>
    </location>
</feature>
<feature type="topological domain" description="Cytoplasmic" evidence="2">
    <location>
        <begin position="98"/>
        <end position="104"/>
    </location>
</feature>
<feature type="transmembrane region" description="Helical; Name=4" evidence="2">
    <location>
        <begin position="105"/>
        <end position="125"/>
    </location>
</feature>
<feature type="topological domain" description="Extracellular" evidence="2">
    <location>
        <begin position="126"/>
        <end position="142"/>
    </location>
</feature>
<feature type="transmembrane region" description="Helical; Name=5" evidence="2">
    <location>
        <begin position="143"/>
        <end position="163"/>
    </location>
</feature>
<feature type="topological domain" description="Cytoplasmic" evidence="2">
    <location>
        <begin position="164"/>
        <end position="169"/>
    </location>
</feature>
<feature type="transmembrane region" description="Helical; Name=6" evidence="2">
    <location>
        <begin position="170"/>
        <end position="190"/>
    </location>
</feature>
<feature type="topological domain" description="Extracellular" evidence="2">
    <location>
        <begin position="191"/>
        <end position="209"/>
    </location>
</feature>
<feature type="transmembrane region" description="Helical; Name=7" evidence="2">
    <location>
        <begin position="210"/>
        <end position="230"/>
    </location>
</feature>
<feature type="topological domain" description="Cytoplasmic" evidence="2">
    <location>
        <begin position="231"/>
        <end position="240"/>
    </location>
</feature>
<feature type="transmembrane region" description="Helical; Name=8" evidence="2">
    <location>
        <begin position="241"/>
        <end position="261"/>
    </location>
</feature>
<feature type="topological domain" description="Extracellular" evidence="2">
    <location>
        <begin position="262"/>
        <end position="272"/>
    </location>
</feature>
<feature type="transmembrane region" description="Helical; Name=9" evidence="2">
    <location>
        <begin position="273"/>
        <end position="293"/>
    </location>
</feature>
<feature type="topological domain" description="Cytoplasmic" evidence="2">
    <location>
        <begin position="294"/>
        <end position="326"/>
    </location>
</feature>
<sequence>MVSDNEMGLVLAVSSSVFIGSSFILKKKGLKRAAANGTRAGFGGYTYLLEPLWWVGLVTMTFGEIANFVAYVYAPAVLVTPLGALSIIISAVLAHFLLDEKLRKMGVWGCVCCIVGSVMIVIHAPQEQTPNSVEEIWKLAMQPAFLIYVAISMSIVLALILYCEPLCGQTNILVYIGICSLMGSLTVMSIKAVGIAIKLTFEGINQIWYPETWFFAMVAAICVVMQMIYLNKALDTFNAAIVSPIYYVMFTTLTIVASAIMFKDWNGQNTDSIASEICGFITVLTGTVILHSTREEEQASPRRMRWQDSGKSFDEEHLTSLYSPEY</sequence>
<reference key="1">
    <citation type="journal article" date="1999" name="Nature">
        <title>Sequence and analysis of chromosome 4 of the plant Arabidopsis thaliana.</title>
        <authorList>
            <person name="Mayer K.F.X."/>
            <person name="Schueller C."/>
            <person name="Wambutt R."/>
            <person name="Murphy G."/>
            <person name="Volckaert G."/>
            <person name="Pohl T."/>
            <person name="Duesterhoeft A."/>
            <person name="Stiekema W."/>
            <person name="Entian K.-D."/>
            <person name="Terryn N."/>
            <person name="Harris B."/>
            <person name="Ansorge W."/>
            <person name="Brandt P."/>
            <person name="Grivell L.A."/>
            <person name="Rieger M."/>
            <person name="Weichselgartner M."/>
            <person name="de Simone V."/>
            <person name="Obermaier B."/>
            <person name="Mache R."/>
            <person name="Mueller M."/>
            <person name="Kreis M."/>
            <person name="Delseny M."/>
            <person name="Puigdomenech P."/>
            <person name="Watson M."/>
            <person name="Schmidtheini T."/>
            <person name="Reichert B."/>
            <person name="Portetelle D."/>
            <person name="Perez-Alonso M."/>
            <person name="Boutry M."/>
            <person name="Bancroft I."/>
            <person name="Vos P."/>
            <person name="Hoheisel J."/>
            <person name="Zimmermann W."/>
            <person name="Wedler H."/>
            <person name="Ridley P."/>
            <person name="Langham S.-A."/>
            <person name="McCullagh B."/>
            <person name="Bilham L."/>
            <person name="Robben J."/>
            <person name="van der Schueren J."/>
            <person name="Grymonprez B."/>
            <person name="Chuang Y.-J."/>
            <person name="Vandenbussche F."/>
            <person name="Braeken M."/>
            <person name="Weltjens I."/>
            <person name="Voet M."/>
            <person name="Bastiaens I."/>
            <person name="Aert R."/>
            <person name="Defoor E."/>
            <person name="Weitzenegger T."/>
            <person name="Bothe G."/>
            <person name="Ramsperger U."/>
            <person name="Hilbert H."/>
            <person name="Braun M."/>
            <person name="Holzer E."/>
            <person name="Brandt A."/>
            <person name="Peters S."/>
            <person name="van Staveren M."/>
            <person name="Dirkse W."/>
            <person name="Mooijman P."/>
            <person name="Klein Lankhorst R."/>
            <person name="Rose M."/>
            <person name="Hauf J."/>
            <person name="Koetter P."/>
            <person name="Berneiser S."/>
            <person name="Hempel S."/>
            <person name="Feldpausch M."/>
            <person name="Lamberth S."/>
            <person name="Van den Daele H."/>
            <person name="De Keyser A."/>
            <person name="Buysshaert C."/>
            <person name="Gielen J."/>
            <person name="Villarroel R."/>
            <person name="De Clercq R."/>
            <person name="van Montagu M."/>
            <person name="Rogers J."/>
            <person name="Cronin A."/>
            <person name="Quail M.A."/>
            <person name="Bray-Allen S."/>
            <person name="Clark L."/>
            <person name="Doggett J."/>
            <person name="Hall S."/>
            <person name="Kay M."/>
            <person name="Lennard N."/>
            <person name="McLay K."/>
            <person name="Mayes R."/>
            <person name="Pettett A."/>
            <person name="Rajandream M.A."/>
            <person name="Lyne M."/>
            <person name="Benes V."/>
            <person name="Rechmann S."/>
            <person name="Borkova D."/>
            <person name="Bloecker H."/>
            <person name="Scharfe M."/>
            <person name="Grimm M."/>
            <person name="Loehnert T.-H."/>
            <person name="Dose S."/>
            <person name="de Haan M."/>
            <person name="Maarse A.C."/>
            <person name="Schaefer M."/>
            <person name="Mueller-Auer S."/>
            <person name="Gabel C."/>
            <person name="Fuchs M."/>
            <person name="Fartmann B."/>
            <person name="Granderath K."/>
            <person name="Dauner D."/>
            <person name="Herzl A."/>
            <person name="Neumann S."/>
            <person name="Argiriou A."/>
            <person name="Vitale D."/>
            <person name="Liguori R."/>
            <person name="Piravandi E."/>
            <person name="Massenet O."/>
            <person name="Quigley F."/>
            <person name="Clabauld G."/>
            <person name="Muendlein A."/>
            <person name="Felber R."/>
            <person name="Schnabl S."/>
            <person name="Hiller R."/>
            <person name="Schmidt W."/>
            <person name="Lecharny A."/>
            <person name="Aubourg S."/>
            <person name="Chefdor F."/>
            <person name="Cooke R."/>
            <person name="Berger C."/>
            <person name="Monfort A."/>
            <person name="Casacuberta E."/>
            <person name="Gibbons T."/>
            <person name="Weber N."/>
            <person name="Vandenbol M."/>
            <person name="Bargues M."/>
            <person name="Terol J."/>
            <person name="Torres A."/>
            <person name="Perez-Perez A."/>
            <person name="Purnelle B."/>
            <person name="Bent E."/>
            <person name="Johnson S."/>
            <person name="Tacon D."/>
            <person name="Jesse T."/>
            <person name="Heijnen L."/>
            <person name="Schwarz S."/>
            <person name="Scholler P."/>
            <person name="Heber S."/>
            <person name="Francs P."/>
            <person name="Bielke C."/>
            <person name="Frishman D."/>
            <person name="Haase D."/>
            <person name="Lemcke K."/>
            <person name="Mewes H.-W."/>
            <person name="Stocker S."/>
            <person name="Zaccaria P."/>
            <person name="Bevan M."/>
            <person name="Wilson R.K."/>
            <person name="de la Bastide M."/>
            <person name="Habermann K."/>
            <person name="Parnell L."/>
            <person name="Dedhia N."/>
            <person name="Gnoj L."/>
            <person name="Schutz K."/>
            <person name="Huang E."/>
            <person name="Spiegel L."/>
            <person name="Sekhon M."/>
            <person name="Murray J."/>
            <person name="Sheet P."/>
            <person name="Cordes M."/>
            <person name="Abu-Threideh J."/>
            <person name="Stoneking T."/>
            <person name="Kalicki J."/>
            <person name="Graves T."/>
            <person name="Harmon G."/>
            <person name="Edwards J."/>
            <person name="Latreille P."/>
            <person name="Courtney L."/>
            <person name="Cloud J."/>
            <person name="Abbott A."/>
            <person name="Scott K."/>
            <person name="Johnson D."/>
            <person name="Minx P."/>
            <person name="Bentley D."/>
            <person name="Fulton B."/>
            <person name="Miller N."/>
            <person name="Greco T."/>
            <person name="Kemp K."/>
            <person name="Kramer J."/>
            <person name="Fulton L."/>
            <person name="Mardis E."/>
            <person name="Dante M."/>
            <person name="Pepin K."/>
            <person name="Hillier L.W."/>
            <person name="Nelson J."/>
            <person name="Spieth J."/>
            <person name="Ryan E."/>
            <person name="Andrews S."/>
            <person name="Geisel C."/>
            <person name="Layman D."/>
            <person name="Du H."/>
            <person name="Ali J."/>
            <person name="Berghoff A."/>
            <person name="Jones K."/>
            <person name="Drone K."/>
            <person name="Cotton M."/>
            <person name="Joshu C."/>
            <person name="Antonoiu B."/>
            <person name="Zidanic M."/>
            <person name="Strong C."/>
            <person name="Sun H."/>
            <person name="Lamar B."/>
            <person name="Yordan C."/>
            <person name="Ma P."/>
            <person name="Zhong J."/>
            <person name="Preston R."/>
            <person name="Vil D."/>
            <person name="Shekher M."/>
            <person name="Matero A."/>
            <person name="Shah R."/>
            <person name="Swaby I.K."/>
            <person name="O'Shaughnessy A."/>
            <person name="Rodriguez M."/>
            <person name="Hoffman J."/>
            <person name="Till S."/>
            <person name="Granat S."/>
            <person name="Shohdy N."/>
            <person name="Hasegawa A."/>
            <person name="Hameed A."/>
            <person name="Lodhi M."/>
            <person name="Johnson A."/>
            <person name="Chen E."/>
            <person name="Marra M.A."/>
            <person name="Martienssen R."/>
            <person name="McCombie W.R."/>
        </authorList>
    </citation>
    <scope>NUCLEOTIDE SEQUENCE [LARGE SCALE GENOMIC DNA]</scope>
    <source>
        <strain>cv. Columbia</strain>
    </source>
</reference>
<reference key="2">
    <citation type="journal article" date="2017" name="Plant J.">
        <title>Araport11: a complete reannotation of the Arabidopsis thaliana reference genome.</title>
        <authorList>
            <person name="Cheng C.Y."/>
            <person name="Krishnakumar V."/>
            <person name="Chan A.P."/>
            <person name="Thibaud-Nissen F."/>
            <person name="Schobel S."/>
            <person name="Town C.D."/>
        </authorList>
    </citation>
    <scope>GENOME REANNOTATION</scope>
    <source>
        <strain>cv. Columbia</strain>
    </source>
</reference>
<reference key="3">
    <citation type="journal article" date="2002" name="Science">
        <title>Functional annotation of a full-length Arabidopsis cDNA collection.</title>
        <authorList>
            <person name="Seki M."/>
            <person name="Narusaka M."/>
            <person name="Kamiya A."/>
            <person name="Ishida J."/>
            <person name="Satou M."/>
            <person name="Sakurai T."/>
            <person name="Nakajima M."/>
            <person name="Enju A."/>
            <person name="Akiyama K."/>
            <person name="Oono Y."/>
            <person name="Muramatsu M."/>
            <person name="Hayashizaki Y."/>
            <person name="Kawai J."/>
            <person name="Carninci P."/>
            <person name="Itoh M."/>
            <person name="Ishii Y."/>
            <person name="Arakawa T."/>
            <person name="Shibata K."/>
            <person name="Shinagawa A."/>
            <person name="Shinozaki K."/>
        </authorList>
    </citation>
    <scope>NUCLEOTIDE SEQUENCE [LARGE SCALE MRNA]</scope>
    <source>
        <strain>cv. Columbia</strain>
    </source>
</reference>
<reference key="4">
    <citation type="journal article" date="2003" name="Science">
        <title>Empirical analysis of transcriptional activity in the Arabidopsis genome.</title>
        <authorList>
            <person name="Yamada K."/>
            <person name="Lim J."/>
            <person name="Dale J.M."/>
            <person name="Chen H."/>
            <person name="Shinn P."/>
            <person name="Palm C.J."/>
            <person name="Southwick A.M."/>
            <person name="Wu H.C."/>
            <person name="Kim C.J."/>
            <person name="Nguyen M."/>
            <person name="Pham P.K."/>
            <person name="Cheuk R.F."/>
            <person name="Karlin-Newmann G."/>
            <person name="Liu S.X."/>
            <person name="Lam B."/>
            <person name="Sakano H."/>
            <person name="Wu T."/>
            <person name="Yu G."/>
            <person name="Miranda M."/>
            <person name="Quach H.L."/>
            <person name="Tripp M."/>
            <person name="Chang C.H."/>
            <person name="Lee J.M."/>
            <person name="Toriumi M.J."/>
            <person name="Chan M.M."/>
            <person name="Tang C.C."/>
            <person name="Onodera C.S."/>
            <person name="Deng J.M."/>
            <person name="Akiyama K."/>
            <person name="Ansari Y."/>
            <person name="Arakawa T."/>
            <person name="Banh J."/>
            <person name="Banno F."/>
            <person name="Bowser L."/>
            <person name="Brooks S.Y."/>
            <person name="Carninci P."/>
            <person name="Chao Q."/>
            <person name="Choy N."/>
            <person name="Enju A."/>
            <person name="Goldsmith A.D."/>
            <person name="Gurjal M."/>
            <person name="Hansen N.F."/>
            <person name="Hayashizaki Y."/>
            <person name="Johnson-Hopson C."/>
            <person name="Hsuan V.W."/>
            <person name="Iida K."/>
            <person name="Karnes M."/>
            <person name="Khan S."/>
            <person name="Koesema E."/>
            <person name="Ishida J."/>
            <person name="Jiang P.X."/>
            <person name="Jones T."/>
            <person name="Kawai J."/>
            <person name="Kamiya A."/>
            <person name="Meyers C."/>
            <person name="Nakajima M."/>
            <person name="Narusaka M."/>
            <person name="Seki M."/>
            <person name="Sakurai T."/>
            <person name="Satou M."/>
            <person name="Tamse R."/>
            <person name="Vaysberg M."/>
            <person name="Wallender E.K."/>
            <person name="Wong C."/>
            <person name="Yamamura Y."/>
            <person name="Yuan S."/>
            <person name="Shinozaki K."/>
            <person name="Davis R.W."/>
            <person name="Theologis A."/>
            <person name="Ecker J.R."/>
        </authorList>
    </citation>
    <scope>NUCLEOTIDE SEQUENCE [LARGE SCALE MRNA]</scope>
    <source>
        <strain>cv. Columbia</strain>
    </source>
</reference>
<comment type="function">
    <text evidence="1">Acts as a Mg(2+) transporter. Can also transport other divalent cations such as Fe(2+), Sr(2+), Ba(2+), Mn(2+) and Co(2+) but to a much less extent than Mg(2+) (By similarity).</text>
</comment>
<comment type="subunit">
    <text evidence="1">Homodimer.</text>
</comment>
<comment type="subcellular location">
    <subcellularLocation>
        <location evidence="1">Cell membrane</location>
        <topology evidence="1">Multi-pass membrane protein</topology>
    </subcellularLocation>
    <subcellularLocation>
        <location evidence="1">Early endosome</location>
    </subcellularLocation>
    <text evidence="1">Recruited to the cell membrane in response to low extracellular magnesium.</text>
</comment>
<comment type="similarity">
    <text evidence="3">Belongs to the NIPA (TC 2.A.7) family.</text>
</comment>
<comment type="sequence caution" evidence="3">
    <conflict type="erroneous gene model prediction">
        <sequence resource="EMBL-CDS" id="CAB38607"/>
    </conflict>
</comment>
<comment type="sequence caution" evidence="3">
    <conflict type="erroneous gene model prediction">
        <sequence resource="EMBL-CDS" id="CAB80536"/>
    </conflict>
</comment>
<name>NIPA7_ARATH</name>
<keyword id="KW-1003">Cell membrane</keyword>
<keyword id="KW-0967">Endosome</keyword>
<keyword id="KW-0406">Ion transport</keyword>
<keyword id="KW-0460">Magnesium</keyword>
<keyword id="KW-0472">Membrane</keyword>
<keyword id="KW-1185">Reference proteome</keyword>
<keyword id="KW-0812">Transmembrane</keyword>
<keyword id="KW-1133">Transmembrane helix</keyword>
<keyword id="KW-0813">Transport</keyword>
<protein>
    <recommendedName>
        <fullName>Probable magnesium transporter NIPA7</fullName>
    </recommendedName>
</protein>
<accession>Q8GYS1</accession>
<accession>Q9T0I2</accession>
<dbReference type="EMBL" id="AL035656">
    <property type="protein sequence ID" value="CAB38607.1"/>
    <property type="status" value="ALT_SEQ"/>
    <property type="molecule type" value="Genomic_DNA"/>
</dbReference>
<dbReference type="EMBL" id="AL161593">
    <property type="protein sequence ID" value="CAB80536.1"/>
    <property type="status" value="ALT_SEQ"/>
    <property type="molecule type" value="Genomic_DNA"/>
</dbReference>
<dbReference type="EMBL" id="CP002687">
    <property type="protein sequence ID" value="AEE86969.1"/>
    <property type="molecule type" value="Genomic_DNA"/>
</dbReference>
<dbReference type="EMBL" id="AK117425">
    <property type="protein sequence ID" value="BAC42090.1"/>
    <property type="molecule type" value="mRNA"/>
</dbReference>
<dbReference type="EMBL" id="BT005138">
    <property type="protein sequence ID" value="AAO50671.1"/>
    <property type="molecule type" value="mRNA"/>
</dbReference>
<dbReference type="PIR" id="T06072">
    <property type="entry name" value="T06072"/>
</dbReference>
<dbReference type="RefSeq" id="NP_195584.2">
    <property type="nucleotide sequence ID" value="NM_120033.5"/>
</dbReference>
<dbReference type="FunCoup" id="Q8GYS1">
    <property type="interactions" value="3498"/>
</dbReference>
<dbReference type="STRING" id="3702.Q8GYS1"/>
<dbReference type="PaxDb" id="3702-AT4G38730.1"/>
<dbReference type="ProteomicsDB" id="250535"/>
<dbReference type="EnsemblPlants" id="AT4G38730.1">
    <property type="protein sequence ID" value="AT4G38730.1"/>
    <property type="gene ID" value="AT4G38730"/>
</dbReference>
<dbReference type="GeneID" id="830028"/>
<dbReference type="Gramene" id="AT4G38730.1">
    <property type="protein sequence ID" value="AT4G38730.1"/>
    <property type="gene ID" value="AT4G38730"/>
</dbReference>
<dbReference type="KEGG" id="ath:AT4G38730"/>
<dbReference type="Araport" id="AT4G38730"/>
<dbReference type="TAIR" id="AT4G38730">
    <property type="gene designation" value="AVI2H"/>
</dbReference>
<dbReference type="eggNOG" id="KOG2922">
    <property type="taxonomic scope" value="Eukaryota"/>
</dbReference>
<dbReference type="HOGENOM" id="CLU_012349_1_1_1"/>
<dbReference type="InParanoid" id="Q8GYS1"/>
<dbReference type="OMA" id="GINQIWY"/>
<dbReference type="PhylomeDB" id="Q8GYS1"/>
<dbReference type="PRO" id="PR:Q8GYS1"/>
<dbReference type="Proteomes" id="UP000006548">
    <property type="component" value="Chromosome 4"/>
</dbReference>
<dbReference type="ExpressionAtlas" id="Q8GYS1">
    <property type="expression patterns" value="baseline and differential"/>
</dbReference>
<dbReference type="GO" id="GO:0005769">
    <property type="term" value="C:early endosome"/>
    <property type="evidence" value="ECO:0000250"/>
    <property type="project" value="UniProtKB"/>
</dbReference>
<dbReference type="GO" id="GO:0005886">
    <property type="term" value="C:plasma membrane"/>
    <property type="evidence" value="ECO:0000250"/>
    <property type="project" value="UniProtKB"/>
</dbReference>
<dbReference type="GO" id="GO:0015095">
    <property type="term" value="F:magnesium ion transmembrane transporter activity"/>
    <property type="evidence" value="ECO:0007669"/>
    <property type="project" value="InterPro"/>
</dbReference>
<dbReference type="GO" id="GO:0015693">
    <property type="term" value="P:magnesium ion transport"/>
    <property type="evidence" value="ECO:0000250"/>
    <property type="project" value="UniProtKB"/>
</dbReference>
<dbReference type="InterPro" id="IPR008521">
    <property type="entry name" value="Mg_trans_NIPA"/>
</dbReference>
<dbReference type="PANTHER" id="PTHR12570">
    <property type="match status" value="1"/>
</dbReference>
<dbReference type="PANTHER" id="PTHR12570:SF62">
    <property type="entry name" value="MAGNESIUM TRANSPORTER NIPA7-RELATED"/>
    <property type="match status" value="1"/>
</dbReference>
<dbReference type="Pfam" id="PF05653">
    <property type="entry name" value="Mg_trans_NIPA"/>
    <property type="match status" value="1"/>
</dbReference>
<dbReference type="SUPFAM" id="SSF103481">
    <property type="entry name" value="Multidrug resistance efflux transporter EmrE"/>
    <property type="match status" value="1"/>
</dbReference>
<proteinExistence type="evidence at transcript level"/>